<protein>
    <recommendedName>
        <fullName evidence="1">Peptide chain release factor 1</fullName>
        <shortName evidence="1">RF-1</shortName>
    </recommendedName>
</protein>
<gene>
    <name evidence="1" type="primary">prfA</name>
    <name type="ordered locus">SA1920</name>
</gene>
<reference key="1">
    <citation type="journal article" date="2001" name="Lancet">
        <title>Whole genome sequencing of meticillin-resistant Staphylococcus aureus.</title>
        <authorList>
            <person name="Kuroda M."/>
            <person name="Ohta T."/>
            <person name="Uchiyama I."/>
            <person name="Baba T."/>
            <person name="Yuzawa H."/>
            <person name="Kobayashi I."/>
            <person name="Cui L."/>
            <person name="Oguchi A."/>
            <person name="Aoki K."/>
            <person name="Nagai Y."/>
            <person name="Lian J.-Q."/>
            <person name="Ito T."/>
            <person name="Kanamori M."/>
            <person name="Matsumaru H."/>
            <person name="Maruyama A."/>
            <person name="Murakami H."/>
            <person name="Hosoyama A."/>
            <person name="Mizutani-Ui Y."/>
            <person name="Takahashi N.K."/>
            <person name="Sawano T."/>
            <person name="Inoue R."/>
            <person name="Kaito C."/>
            <person name="Sekimizu K."/>
            <person name="Hirakawa H."/>
            <person name="Kuhara S."/>
            <person name="Goto S."/>
            <person name="Yabuzaki J."/>
            <person name="Kanehisa M."/>
            <person name="Yamashita A."/>
            <person name="Oshima K."/>
            <person name="Furuya K."/>
            <person name="Yoshino C."/>
            <person name="Shiba T."/>
            <person name="Hattori M."/>
            <person name="Ogasawara N."/>
            <person name="Hayashi H."/>
            <person name="Hiramatsu K."/>
        </authorList>
    </citation>
    <scope>NUCLEOTIDE SEQUENCE [LARGE SCALE GENOMIC DNA]</scope>
    <source>
        <strain>N315</strain>
    </source>
</reference>
<dbReference type="EMBL" id="BA000018">
    <property type="protein sequence ID" value="BAB43204.1"/>
    <property type="molecule type" value="Genomic_DNA"/>
</dbReference>
<dbReference type="PIR" id="C90005">
    <property type="entry name" value="C90005"/>
</dbReference>
<dbReference type="RefSeq" id="WP_000460242.1">
    <property type="nucleotide sequence ID" value="NC_002745.2"/>
</dbReference>
<dbReference type="SMR" id="P66019"/>
<dbReference type="EnsemblBacteria" id="BAB43204">
    <property type="protein sequence ID" value="BAB43204"/>
    <property type="gene ID" value="BAB43204"/>
</dbReference>
<dbReference type="KEGG" id="sau:SA1920"/>
<dbReference type="HOGENOM" id="CLU_036856_0_1_9"/>
<dbReference type="GO" id="GO:0005737">
    <property type="term" value="C:cytoplasm"/>
    <property type="evidence" value="ECO:0007669"/>
    <property type="project" value="UniProtKB-SubCell"/>
</dbReference>
<dbReference type="GO" id="GO:0016149">
    <property type="term" value="F:translation release factor activity, codon specific"/>
    <property type="evidence" value="ECO:0007669"/>
    <property type="project" value="UniProtKB-UniRule"/>
</dbReference>
<dbReference type="FunFam" id="3.30.160.20:FF:000004">
    <property type="entry name" value="Peptide chain release factor 1"/>
    <property type="match status" value="1"/>
</dbReference>
<dbReference type="FunFam" id="3.30.70.1660:FF:000002">
    <property type="entry name" value="Peptide chain release factor 1"/>
    <property type="match status" value="1"/>
</dbReference>
<dbReference type="FunFam" id="3.30.70.1660:FF:000004">
    <property type="entry name" value="Peptide chain release factor 1"/>
    <property type="match status" value="1"/>
</dbReference>
<dbReference type="Gene3D" id="3.30.160.20">
    <property type="match status" value="1"/>
</dbReference>
<dbReference type="Gene3D" id="3.30.70.1660">
    <property type="match status" value="1"/>
</dbReference>
<dbReference type="Gene3D" id="6.10.140.1950">
    <property type="match status" value="1"/>
</dbReference>
<dbReference type="HAMAP" id="MF_00093">
    <property type="entry name" value="Rel_fac_1"/>
    <property type="match status" value="1"/>
</dbReference>
<dbReference type="InterPro" id="IPR005139">
    <property type="entry name" value="PCRF"/>
</dbReference>
<dbReference type="InterPro" id="IPR000352">
    <property type="entry name" value="Pep_chain_release_fac_I"/>
</dbReference>
<dbReference type="InterPro" id="IPR045853">
    <property type="entry name" value="Pep_chain_release_fac_I_sf"/>
</dbReference>
<dbReference type="InterPro" id="IPR050057">
    <property type="entry name" value="Prokaryotic/Mito_RF"/>
</dbReference>
<dbReference type="InterPro" id="IPR004373">
    <property type="entry name" value="RF-1"/>
</dbReference>
<dbReference type="NCBIfam" id="TIGR00019">
    <property type="entry name" value="prfA"/>
    <property type="match status" value="1"/>
</dbReference>
<dbReference type="NCBIfam" id="NF001859">
    <property type="entry name" value="PRK00591.1"/>
    <property type="match status" value="1"/>
</dbReference>
<dbReference type="PANTHER" id="PTHR43804">
    <property type="entry name" value="LD18447P"/>
    <property type="match status" value="1"/>
</dbReference>
<dbReference type="PANTHER" id="PTHR43804:SF7">
    <property type="entry name" value="LD18447P"/>
    <property type="match status" value="1"/>
</dbReference>
<dbReference type="Pfam" id="PF03462">
    <property type="entry name" value="PCRF"/>
    <property type="match status" value="1"/>
</dbReference>
<dbReference type="Pfam" id="PF00472">
    <property type="entry name" value="RF-1"/>
    <property type="match status" value="1"/>
</dbReference>
<dbReference type="SMART" id="SM00937">
    <property type="entry name" value="PCRF"/>
    <property type="match status" value="1"/>
</dbReference>
<dbReference type="SUPFAM" id="SSF75620">
    <property type="entry name" value="Release factor"/>
    <property type="match status" value="1"/>
</dbReference>
<dbReference type="PROSITE" id="PS00745">
    <property type="entry name" value="RF_PROK_I"/>
    <property type="match status" value="1"/>
</dbReference>
<comment type="function">
    <text evidence="1">Peptide chain release factor 1 directs the termination of translation in response to the peptide chain termination codons UAG and UAA.</text>
</comment>
<comment type="subcellular location">
    <subcellularLocation>
        <location evidence="1">Cytoplasm</location>
    </subcellularLocation>
</comment>
<comment type="PTM">
    <text evidence="1">Methylated by PrmC. Methylation increases the termination efficiency of RF1.</text>
</comment>
<comment type="similarity">
    <text evidence="1">Belongs to the prokaryotic/mitochondrial release factor family.</text>
</comment>
<organism>
    <name type="scientific">Staphylococcus aureus (strain N315)</name>
    <dbReference type="NCBI Taxonomy" id="158879"/>
    <lineage>
        <taxon>Bacteria</taxon>
        <taxon>Bacillati</taxon>
        <taxon>Bacillota</taxon>
        <taxon>Bacilli</taxon>
        <taxon>Bacillales</taxon>
        <taxon>Staphylococcaceae</taxon>
        <taxon>Staphylococcus</taxon>
    </lineage>
</organism>
<name>RF1_STAAN</name>
<keyword id="KW-0963">Cytoplasm</keyword>
<keyword id="KW-0488">Methylation</keyword>
<keyword id="KW-0648">Protein biosynthesis</keyword>
<accession>P66019</accession>
<accession>Q99SE0</accession>
<proteinExistence type="inferred from homology"/>
<evidence type="ECO:0000255" key="1">
    <source>
        <dbReference type="HAMAP-Rule" id="MF_00093"/>
    </source>
</evidence>
<feature type="chain" id="PRO_0000177739" description="Peptide chain release factor 1">
    <location>
        <begin position="1"/>
        <end position="358"/>
    </location>
</feature>
<feature type="modified residue" description="N5-methylglutamine" evidence="1">
    <location>
        <position position="233"/>
    </location>
</feature>
<sequence>MFDQLDIVEERYEQLNELLSDPDVVNDSDKLRKYSKEQADLQKTVDVYRNYKAKKEELADIEEMLSETDDKEEVEMLKEESNGIKAELPNLEEELKILLIPKDPNDDKDVIVEIRAAAGGDEAAIFAGDLMRMYSKYAESQGFKTEIVEASESDHGGYKEISFSVSGNGAYSKLKFENGAHRVQRVPETESGGRIHTSTATVAVLPEVEDVEIEIRNEDLKIDTYRSSGAGGQHVNTTDSAVRITHLPTGVIATSSEKSQIQNREKAMKVLKARLYDMKVQEEQQKYASQRKSAVGTGDRSERIRTYNYPQSRVTDHRIGLTLQKLGQIMEGHLEEIIDALTLSEQTDKLKELNNGEL</sequence>